<accession>A8A8A3</accession>
<dbReference type="EMBL" id="CP000802">
    <property type="protein sequence ID" value="ABV08757.1"/>
    <property type="molecule type" value="Genomic_DNA"/>
</dbReference>
<dbReference type="RefSeq" id="WP_000175943.1">
    <property type="nucleotide sequence ID" value="NC_009800.1"/>
</dbReference>
<dbReference type="SMR" id="A8A8A3"/>
<dbReference type="GeneID" id="75169869"/>
<dbReference type="KEGG" id="ecx:EcHS_A4609"/>
<dbReference type="HOGENOM" id="CLU_002794_2_1_6"/>
<dbReference type="GO" id="GO:0005829">
    <property type="term" value="C:cytosol"/>
    <property type="evidence" value="ECO:0007669"/>
    <property type="project" value="TreeGrafter"/>
</dbReference>
<dbReference type="GO" id="GO:0005525">
    <property type="term" value="F:GTP binding"/>
    <property type="evidence" value="ECO:0007669"/>
    <property type="project" value="UniProtKB-UniRule"/>
</dbReference>
<dbReference type="GO" id="GO:0003924">
    <property type="term" value="F:GTPase activity"/>
    <property type="evidence" value="ECO:0007669"/>
    <property type="project" value="InterPro"/>
</dbReference>
<dbReference type="GO" id="GO:0097216">
    <property type="term" value="F:guanosine tetraphosphate binding"/>
    <property type="evidence" value="ECO:0007669"/>
    <property type="project" value="UniProtKB-ARBA"/>
</dbReference>
<dbReference type="GO" id="GO:0016150">
    <property type="term" value="F:translation release factor activity, codon nonspecific"/>
    <property type="evidence" value="ECO:0007669"/>
    <property type="project" value="TreeGrafter"/>
</dbReference>
<dbReference type="GO" id="GO:0016149">
    <property type="term" value="F:translation release factor activity, codon specific"/>
    <property type="evidence" value="ECO:0007669"/>
    <property type="project" value="UniProtKB-UniRule"/>
</dbReference>
<dbReference type="GO" id="GO:0006449">
    <property type="term" value="P:regulation of translational termination"/>
    <property type="evidence" value="ECO:0007669"/>
    <property type="project" value="UniProtKB-UniRule"/>
</dbReference>
<dbReference type="CDD" id="cd04169">
    <property type="entry name" value="RF3"/>
    <property type="match status" value="1"/>
</dbReference>
<dbReference type="CDD" id="cd03689">
    <property type="entry name" value="RF3_II"/>
    <property type="match status" value="1"/>
</dbReference>
<dbReference type="CDD" id="cd16259">
    <property type="entry name" value="RF3_III"/>
    <property type="match status" value="1"/>
</dbReference>
<dbReference type="FunFam" id="2.40.30.10:FF:000040">
    <property type="entry name" value="Peptide chain release factor 3"/>
    <property type="match status" value="1"/>
</dbReference>
<dbReference type="FunFam" id="3.30.70.3280:FF:000001">
    <property type="entry name" value="Peptide chain release factor 3"/>
    <property type="match status" value="1"/>
</dbReference>
<dbReference type="FunFam" id="3.40.50.300:FF:000184">
    <property type="entry name" value="Peptide chain release factor 3"/>
    <property type="match status" value="1"/>
</dbReference>
<dbReference type="FunFam" id="3.40.50.300:FF:000253">
    <property type="entry name" value="Peptide chain release factor 3"/>
    <property type="match status" value="1"/>
</dbReference>
<dbReference type="Gene3D" id="3.40.50.300">
    <property type="entry name" value="P-loop containing nucleotide triphosphate hydrolases"/>
    <property type="match status" value="3"/>
</dbReference>
<dbReference type="Gene3D" id="3.30.70.3280">
    <property type="entry name" value="Peptide chain release factor 3, domain III"/>
    <property type="match status" value="1"/>
</dbReference>
<dbReference type="HAMAP" id="MF_00072">
    <property type="entry name" value="Rel_fac_3"/>
    <property type="match status" value="1"/>
</dbReference>
<dbReference type="InterPro" id="IPR053905">
    <property type="entry name" value="EF-G-like_DII"/>
</dbReference>
<dbReference type="InterPro" id="IPR035647">
    <property type="entry name" value="EFG_III/V"/>
</dbReference>
<dbReference type="InterPro" id="IPR031157">
    <property type="entry name" value="G_TR_CS"/>
</dbReference>
<dbReference type="InterPro" id="IPR027417">
    <property type="entry name" value="P-loop_NTPase"/>
</dbReference>
<dbReference type="InterPro" id="IPR004548">
    <property type="entry name" value="PrfC"/>
</dbReference>
<dbReference type="InterPro" id="IPR032090">
    <property type="entry name" value="RF3_C"/>
</dbReference>
<dbReference type="InterPro" id="IPR038467">
    <property type="entry name" value="RF3_dom_3_sf"/>
</dbReference>
<dbReference type="InterPro" id="IPR041732">
    <property type="entry name" value="RF3_GTP-bd"/>
</dbReference>
<dbReference type="InterPro" id="IPR005225">
    <property type="entry name" value="Small_GTP-bd"/>
</dbReference>
<dbReference type="InterPro" id="IPR000795">
    <property type="entry name" value="T_Tr_GTP-bd_dom"/>
</dbReference>
<dbReference type="InterPro" id="IPR009000">
    <property type="entry name" value="Transl_B-barrel_sf"/>
</dbReference>
<dbReference type="NCBIfam" id="TIGR00503">
    <property type="entry name" value="prfC"/>
    <property type="match status" value="1"/>
</dbReference>
<dbReference type="NCBIfam" id="NF001964">
    <property type="entry name" value="PRK00741.1"/>
    <property type="match status" value="1"/>
</dbReference>
<dbReference type="NCBIfam" id="TIGR00231">
    <property type="entry name" value="small_GTP"/>
    <property type="match status" value="1"/>
</dbReference>
<dbReference type="PANTHER" id="PTHR43556">
    <property type="entry name" value="PEPTIDE CHAIN RELEASE FACTOR RF3"/>
    <property type="match status" value="1"/>
</dbReference>
<dbReference type="PANTHER" id="PTHR43556:SF2">
    <property type="entry name" value="PEPTIDE CHAIN RELEASE FACTOR RF3"/>
    <property type="match status" value="1"/>
</dbReference>
<dbReference type="Pfam" id="PF22042">
    <property type="entry name" value="EF-G_D2"/>
    <property type="match status" value="1"/>
</dbReference>
<dbReference type="Pfam" id="PF00009">
    <property type="entry name" value="GTP_EFTU"/>
    <property type="match status" value="1"/>
</dbReference>
<dbReference type="Pfam" id="PF16658">
    <property type="entry name" value="RF3_C"/>
    <property type="match status" value="1"/>
</dbReference>
<dbReference type="PRINTS" id="PR00315">
    <property type="entry name" value="ELONGATNFCT"/>
</dbReference>
<dbReference type="SUPFAM" id="SSF54980">
    <property type="entry name" value="EF-G C-terminal domain-like"/>
    <property type="match status" value="1"/>
</dbReference>
<dbReference type="SUPFAM" id="SSF52540">
    <property type="entry name" value="P-loop containing nucleoside triphosphate hydrolases"/>
    <property type="match status" value="1"/>
</dbReference>
<dbReference type="SUPFAM" id="SSF50447">
    <property type="entry name" value="Translation proteins"/>
    <property type="match status" value="1"/>
</dbReference>
<dbReference type="PROSITE" id="PS00301">
    <property type="entry name" value="G_TR_1"/>
    <property type="match status" value="1"/>
</dbReference>
<dbReference type="PROSITE" id="PS51722">
    <property type="entry name" value="G_TR_2"/>
    <property type="match status" value="1"/>
</dbReference>
<keyword id="KW-0963">Cytoplasm</keyword>
<keyword id="KW-0342">GTP-binding</keyword>
<keyword id="KW-0547">Nucleotide-binding</keyword>
<keyword id="KW-0648">Protein biosynthesis</keyword>
<proteinExistence type="inferred from homology"/>
<gene>
    <name evidence="1" type="primary">prfC</name>
    <name type="ordered locus">EcHS_A4609</name>
</gene>
<protein>
    <recommendedName>
        <fullName evidence="1">Peptide chain release factor 3</fullName>
        <shortName evidence="1">RF-3</shortName>
    </recommendedName>
</protein>
<evidence type="ECO:0000255" key="1">
    <source>
        <dbReference type="HAMAP-Rule" id="MF_00072"/>
    </source>
</evidence>
<reference key="1">
    <citation type="journal article" date="2008" name="J. Bacteriol.">
        <title>The pangenome structure of Escherichia coli: comparative genomic analysis of E. coli commensal and pathogenic isolates.</title>
        <authorList>
            <person name="Rasko D.A."/>
            <person name="Rosovitz M.J."/>
            <person name="Myers G.S.A."/>
            <person name="Mongodin E.F."/>
            <person name="Fricke W.F."/>
            <person name="Gajer P."/>
            <person name="Crabtree J."/>
            <person name="Sebaihia M."/>
            <person name="Thomson N.R."/>
            <person name="Chaudhuri R."/>
            <person name="Henderson I.R."/>
            <person name="Sperandio V."/>
            <person name="Ravel J."/>
        </authorList>
    </citation>
    <scope>NUCLEOTIDE SEQUENCE [LARGE SCALE GENOMIC DNA]</scope>
    <source>
        <strain>HS</strain>
    </source>
</reference>
<sequence>MTLSPYLQEVAKRRTFAIISHPDAGKTTITEKVLLFGQAIQTAGTVKGRGSNQHAKSDWMEMEKQRGISITTSVMQFPYHDCLVNLLDTPGHEDFSEDTYRTLTAVDCCLMVIDAAKGVEDRTRKLMEVTRLRDTPILTFMNKLDRDIRDPMELLDEVENELKIGCAPITWPIGCGKLFKGVYHLYKDETYLYQSGKGHTIQEVRIVKGLNNPDLDAAVGEDLAQQLRDELELVKGASNEFDKELFLAGEITPVFFGTALGNFGVDHMLDGLVEWAPAPMPRQTDTRTVEASEDKFTGFVFKIQANMDPKHRDRVAFMRVVSGKYEKGMKLRQVRTAKDVVISDALTFMAGDRSHVEEAYPGDILGLHNHGTIQIGDTFTQGEMMKFTGIPNFAPELFRRIRLKDPLKQKQLLKGLVQLSEEGAVQVFRPISNNDLIVGAVGVLQFDVVVSRLKSEYNVEAVYESVNVATARWVECADAKKFEEFKRKNESQLALDGGDNLAYIATSMVNLRLAQERYPDVQFHQTREH</sequence>
<name>RF3_ECOHS</name>
<feature type="chain" id="PRO_1000057482" description="Peptide chain release factor 3">
    <location>
        <begin position="1"/>
        <end position="529"/>
    </location>
</feature>
<feature type="domain" description="tr-type G">
    <location>
        <begin position="11"/>
        <end position="280"/>
    </location>
</feature>
<feature type="binding site" evidence="1">
    <location>
        <begin position="20"/>
        <end position="27"/>
    </location>
    <ligand>
        <name>GTP</name>
        <dbReference type="ChEBI" id="CHEBI:37565"/>
    </ligand>
</feature>
<feature type="binding site" evidence="1">
    <location>
        <begin position="88"/>
        <end position="92"/>
    </location>
    <ligand>
        <name>GTP</name>
        <dbReference type="ChEBI" id="CHEBI:37565"/>
    </ligand>
</feature>
<feature type="binding site" evidence="1">
    <location>
        <begin position="142"/>
        <end position="145"/>
    </location>
    <ligand>
        <name>GTP</name>
        <dbReference type="ChEBI" id="CHEBI:37565"/>
    </ligand>
</feature>
<comment type="function">
    <text evidence="1">Increases the formation of ribosomal termination complexes and stimulates activities of RF-1 and RF-2. It binds guanine nucleotides and has strong preference for UGA stop codons. It may interact directly with the ribosome. The stimulation of RF-1 and RF-2 is significantly reduced by GTP and GDP, but not by GMP.</text>
</comment>
<comment type="subcellular location">
    <subcellularLocation>
        <location evidence="1">Cytoplasm</location>
    </subcellularLocation>
</comment>
<comment type="similarity">
    <text evidence="1">Belongs to the TRAFAC class translation factor GTPase superfamily. Classic translation factor GTPase family. PrfC subfamily.</text>
</comment>
<organism>
    <name type="scientific">Escherichia coli O9:H4 (strain HS)</name>
    <dbReference type="NCBI Taxonomy" id="331112"/>
    <lineage>
        <taxon>Bacteria</taxon>
        <taxon>Pseudomonadati</taxon>
        <taxon>Pseudomonadota</taxon>
        <taxon>Gammaproteobacteria</taxon>
        <taxon>Enterobacterales</taxon>
        <taxon>Enterobacteriaceae</taxon>
        <taxon>Escherichia</taxon>
    </lineage>
</organism>